<sequence>MLLFCPGCGNGLIVEEGQRCHRFACNTCPYVHNVTRKVTNRKYPKLKEVDDELGGAAAWENVDSTAEPCPKCEHPRAYFMQLQTRYADEPMTTFYKCCNAQCGHRWRD</sequence>
<accession>Q2M2S7</accession>
<feature type="chain" id="PRO_0000244734" description="DNA-directed RNA polymerase III subunit RPC10">
    <location>
        <begin position="1"/>
        <end position="108"/>
    </location>
</feature>
<feature type="zinc finger region" description="C4-type" evidence="3">
    <location>
        <begin position="5"/>
        <end position="28"/>
    </location>
</feature>
<feature type="zinc finger region" description="TFIIS-type" evidence="4">
    <location>
        <begin position="65"/>
        <end position="107"/>
    </location>
</feature>
<feature type="short sequence motif" description="Hairpin" evidence="2">
    <location>
        <begin position="88"/>
        <end position="89"/>
    </location>
</feature>
<feature type="binding site" evidence="5">
    <location>
        <position position="5"/>
    </location>
    <ligand>
        <name>Zn(2+)</name>
        <dbReference type="ChEBI" id="CHEBI:29105"/>
        <label>1</label>
    </ligand>
</feature>
<feature type="binding site" evidence="5">
    <location>
        <position position="8"/>
    </location>
    <ligand>
        <name>Zn(2+)</name>
        <dbReference type="ChEBI" id="CHEBI:29105"/>
        <label>1</label>
    </ligand>
</feature>
<feature type="binding site" evidence="5">
    <location>
        <position position="25"/>
    </location>
    <ligand>
        <name>Zn(2+)</name>
        <dbReference type="ChEBI" id="CHEBI:29105"/>
        <label>1</label>
    </ligand>
</feature>
<feature type="binding site" evidence="5">
    <location>
        <position position="28"/>
    </location>
    <ligand>
        <name>Zn(2+)</name>
        <dbReference type="ChEBI" id="CHEBI:29105"/>
        <label>1</label>
    </ligand>
</feature>
<feature type="binding site" evidence="4">
    <location>
        <position position="69"/>
    </location>
    <ligand>
        <name>Zn(2+)</name>
        <dbReference type="ChEBI" id="CHEBI:29105"/>
        <label>2</label>
    </ligand>
</feature>
<feature type="binding site" evidence="4">
    <location>
        <position position="72"/>
    </location>
    <ligand>
        <name>Zn(2+)</name>
        <dbReference type="ChEBI" id="CHEBI:29105"/>
        <label>2</label>
    </ligand>
</feature>
<feature type="binding site" evidence="4">
    <location>
        <position position="98"/>
    </location>
    <ligand>
        <name>Zn(2+)</name>
        <dbReference type="ChEBI" id="CHEBI:29105"/>
        <label>2</label>
    </ligand>
</feature>
<feature type="binding site" evidence="4">
    <location>
        <position position="102"/>
    </location>
    <ligand>
        <name>Zn(2+)</name>
        <dbReference type="ChEBI" id="CHEBI:29105"/>
        <label>2</label>
    </ligand>
</feature>
<reference key="1">
    <citation type="submission" date="2006-01" db="EMBL/GenBank/DDBJ databases">
        <authorList>
            <consortium name="NIH - Mammalian Gene Collection (MGC) project"/>
        </authorList>
    </citation>
    <scope>NUCLEOTIDE SEQUENCE [LARGE SCALE MRNA]</scope>
    <source>
        <strain>Hereford</strain>
        <tissue>Testis</tissue>
    </source>
</reference>
<protein>
    <recommendedName>
        <fullName>DNA-directed RNA polymerase III subunit RPC10</fullName>
        <shortName>RNA polymerase III subunit C10</shortName>
    </recommendedName>
    <alternativeName>
        <fullName>DNA-directed RNA polymerase III subunit K</fullName>
    </alternativeName>
    <alternativeName>
        <fullName>RNA polymerase III subunit C11</fullName>
        <shortName>RPC11</shortName>
    </alternativeName>
</protein>
<proteinExistence type="inferred from homology"/>
<dbReference type="EMBL" id="BC111667">
    <property type="protein sequence ID" value="AAI11668.1"/>
    <property type="molecule type" value="mRNA"/>
</dbReference>
<dbReference type="RefSeq" id="NP_001040082.1">
    <property type="nucleotide sequence ID" value="NM_001046617.2"/>
</dbReference>
<dbReference type="SMR" id="Q2M2S7"/>
<dbReference type="FunCoup" id="Q2M2S7">
    <property type="interactions" value="289"/>
</dbReference>
<dbReference type="STRING" id="9913.ENSBTAP00000026386"/>
<dbReference type="PaxDb" id="9913-ENSBTAP00000026386"/>
<dbReference type="GeneID" id="618296"/>
<dbReference type="KEGG" id="bta:618296"/>
<dbReference type="CTD" id="51728"/>
<dbReference type="eggNOG" id="KOG2906">
    <property type="taxonomic scope" value="Eukaryota"/>
</dbReference>
<dbReference type="InParanoid" id="Q2M2S7"/>
<dbReference type="OrthoDB" id="282152at2759"/>
<dbReference type="Proteomes" id="UP000009136">
    <property type="component" value="Unplaced"/>
</dbReference>
<dbReference type="GO" id="GO:0005666">
    <property type="term" value="C:RNA polymerase III complex"/>
    <property type="evidence" value="ECO:0000318"/>
    <property type="project" value="GO_Central"/>
</dbReference>
<dbReference type="GO" id="GO:0003899">
    <property type="term" value="F:DNA-directed RNA polymerase activity"/>
    <property type="evidence" value="ECO:0007669"/>
    <property type="project" value="InterPro"/>
</dbReference>
<dbReference type="GO" id="GO:0003676">
    <property type="term" value="F:nucleic acid binding"/>
    <property type="evidence" value="ECO:0007669"/>
    <property type="project" value="InterPro"/>
</dbReference>
<dbReference type="GO" id="GO:0008270">
    <property type="term" value="F:zinc ion binding"/>
    <property type="evidence" value="ECO:0007669"/>
    <property type="project" value="UniProtKB-KW"/>
</dbReference>
<dbReference type="GO" id="GO:0051607">
    <property type="term" value="P:defense response to virus"/>
    <property type="evidence" value="ECO:0007669"/>
    <property type="project" value="UniProtKB-KW"/>
</dbReference>
<dbReference type="GO" id="GO:0045087">
    <property type="term" value="P:innate immune response"/>
    <property type="evidence" value="ECO:0007669"/>
    <property type="project" value="UniProtKB-KW"/>
</dbReference>
<dbReference type="GO" id="GO:0006386">
    <property type="term" value="P:termination of RNA polymerase III transcription"/>
    <property type="evidence" value="ECO:0000318"/>
    <property type="project" value="GO_Central"/>
</dbReference>
<dbReference type="CDD" id="cd10509">
    <property type="entry name" value="Zn-ribbon_RPC11"/>
    <property type="match status" value="1"/>
</dbReference>
<dbReference type="FunFam" id="2.20.25.10:FF:000005">
    <property type="entry name" value="DNA-directed RNA polymerase subunit"/>
    <property type="match status" value="1"/>
</dbReference>
<dbReference type="Gene3D" id="2.20.25.10">
    <property type="match status" value="1"/>
</dbReference>
<dbReference type="InterPro" id="IPR019761">
    <property type="entry name" value="DNA-dir_RNA_pol-M_15_CS"/>
</dbReference>
<dbReference type="InterPro" id="IPR012164">
    <property type="entry name" value="Rpa12/Rpb9/Rpc10/TFS"/>
</dbReference>
<dbReference type="InterPro" id="IPR001529">
    <property type="entry name" value="Zn_ribbon_RPB9"/>
</dbReference>
<dbReference type="InterPro" id="IPR034014">
    <property type="entry name" value="Zn_ribbon_RPC11_C"/>
</dbReference>
<dbReference type="InterPro" id="IPR001222">
    <property type="entry name" value="Znf_TFIIS"/>
</dbReference>
<dbReference type="PANTHER" id="PTHR11239">
    <property type="entry name" value="DNA-DIRECTED RNA POLYMERASE"/>
    <property type="match status" value="1"/>
</dbReference>
<dbReference type="PANTHER" id="PTHR11239:SF12">
    <property type="entry name" value="DNA-DIRECTED RNA POLYMERASE III SUBUNIT RPC10"/>
    <property type="match status" value="1"/>
</dbReference>
<dbReference type="Pfam" id="PF02150">
    <property type="entry name" value="Zn_ribbon_RPB9"/>
    <property type="match status" value="1"/>
</dbReference>
<dbReference type="Pfam" id="PF01096">
    <property type="entry name" value="Zn_ribbon_TFIIS"/>
    <property type="match status" value="1"/>
</dbReference>
<dbReference type="PIRSF" id="PIRSF005586">
    <property type="entry name" value="RNApol_RpoM"/>
    <property type="match status" value="1"/>
</dbReference>
<dbReference type="SMART" id="SM00661">
    <property type="entry name" value="RPOL9"/>
    <property type="match status" value="1"/>
</dbReference>
<dbReference type="SMART" id="SM00440">
    <property type="entry name" value="ZnF_C2C2"/>
    <property type="match status" value="1"/>
</dbReference>
<dbReference type="SUPFAM" id="SSF57783">
    <property type="entry name" value="Zinc beta-ribbon"/>
    <property type="match status" value="1"/>
</dbReference>
<dbReference type="PROSITE" id="PS01030">
    <property type="entry name" value="RNA_POL_M_15KD"/>
    <property type="match status" value="1"/>
</dbReference>
<dbReference type="PROSITE" id="PS51133">
    <property type="entry name" value="ZF_TFIIS_2"/>
    <property type="match status" value="1"/>
</dbReference>
<keyword id="KW-0051">Antiviral defense</keyword>
<keyword id="KW-0240">DNA-directed RNA polymerase</keyword>
<keyword id="KW-0391">Immunity</keyword>
<keyword id="KW-0399">Innate immunity</keyword>
<keyword id="KW-0479">Metal-binding</keyword>
<keyword id="KW-0539">Nucleus</keyword>
<keyword id="KW-1185">Reference proteome</keyword>
<keyword id="KW-0804">Transcription</keyword>
<keyword id="KW-0862">Zinc</keyword>
<keyword id="KW-0863">Zinc-finger</keyword>
<organism>
    <name type="scientific">Bos taurus</name>
    <name type="common">Bovine</name>
    <dbReference type="NCBI Taxonomy" id="9913"/>
    <lineage>
        <taxon>Eukaryota</taxon>
        <taxon>Metazoa</taxon>
        <taxon>Chordata</taxon>
        <taxon>Craniata</taxon>
        <taxon>Vertebrata</taxon>
        <taxon>Euteleostomi</taxon>
        <taxon>Mammalia</taxon>
        <taxon>Eutheria</taxon>
        <taxon>Laurasiatheria</taxon>
        <taxon>Artiodactyla</taxon>
        <taxon>Ruminantia</taxon>
        <taxon>Pecora</taxon>
        <taxon>Bovidae</taxon>
        <taxon>Bovinae</taxon>
        <taxon>Bos</taxon>
    </lineage>
</organism>
<comment type="function">
    <text evidence="1 2">Core component of RNA polymerase III (Pol III) which synthesizes small non-coding RNAs using the four ribonucleoside triphosphates as substrates (By similarity). Can mediate Pol I proofreading of the nascent RNA transcript. Anchors into the Pol III active site to constantly monitor transcription fidelity, cleaves mis-incorporated 5'-ribonucleotides and restarts the transcription process. Once Pol III reaches the poly(dT) termination signal, can induce Pol III clamp opening and transcription termination (By similarity). Pol III plays an important role in sensing and limiting infection by intracellular bacteria and DNA viruses. Acts as a nuclear and cytosolic DNA sensor involved in innate immune response. Can sense non-self dsDNA that serves as template for transcription into dsRNA. The non-self RNA polymerase III transcripts, such as Epstein-Barr virus-encoded RNAs (EBERs) induce type I interferon and NF-kappa-B through the RIG-I pathway (By similarity).</text>
</comment>
<comment type="subunit">
    <text evidence="2">Component of the RNA polymerase III complex consisting of 17 subunits: a ten-subunit horseshoe-shaped catalytic core composed of POLR3A/RPC1, POLR3B/RPC2, POLR1C/RPAC1, POLR1D/RPAC2, POLR3K/RPC10, POLR2E/RPABC1, POLR2F/RPABC2, POLR2H/RPABC3, POLR2K/RPABC4 and POLR2L/RPABC5; a mobile stalk composed of two subunits POLR3H/RPC8 and CRCP/RPC9, protruding from the core and functioning primarily in transcription initiation; and additional subunits homologous to general transcription factors of the RNA polymerase II machinery, POLR3C/RPC3-POLR3F/RPC6-POLR3G/RPC7 heterotrimer required for transcription initiation and POLR3D/RPC4-POLR3E/RPC5 heterodimer involved in both transcription initiation and termination.</text>
</comment>
<comment type="subcellular location">
    <subcellularLocation>
        <location evidence="2">Nucleus</location>
    </subcellularLocation>
</comment>
<comment type="domain">
    <text evidence="2">The TFIIS-type zinc-binding beta-ribbon domain contains an acidic hairpin motif (residues Asp-88, Glu-89) that likely coordinates the nucleophilic water and magnesium to cleave the scissile phosphodiester bond and release the mis-incorporated 5'-ribonucleotides.</text>
</comment>
<comment type="similarity">
    <text evidence="6">Belongs to the archaeal RpoM/eukaryotic RPA12/RPB9/RPC11 RNA polymerase family.</text>
</comment>
<gene>
    <name type="primary">POLR3K</name>
</gene>
<name>RPC10_BOVIN</name>
<evidence type="ECO:0000250" key="1">
    <source>
        <dbReference type="UniProtKB" id="Q04307"/>
    </source>
</evidence>
<evidence type="ECO:0000250" key="2">
    <source>
        <dbReference type="UniProtKB" id="Q9Y2Y1"/>
    </source>
</evidence>
<evidence type="ECO:0000255" key="3"/>
<evidence type="ECO:0000255" key="4">
    <source>
        <dbReference type="PROSITE-ProRule" id="PRU00472"/>
    </source>
</evidence>
<evidence type="ECO:0000255" key="5">
    <source>
        <dbReference type="PROSITE-ProRule" id="PRU10145"/>
    </source>
</evidence>
<evidence type="ECO:0000305" key="6"/>